<proteinExistence type="inferred from homology"/>
<dbReference type="EC" id="1.17.7.3" evidence="1"/>
<dbReference type="EMBL" id="AL954747">
    <property type="protein sequence ID" value="CAD84059.1"/>
    <property type="status" value="ALT_FRAME"/>
    <property type="molecule type" value="Genomic_DNA"/>
</dbReference>
<dbReference type="EMBL" id="AL954747">
    <property type="protein sequence ID" value="CAD84060.1"/>
    <property type="status" value="ALT_FRAME"/>
    <property type="molecule type" value="Genomic_DNA"/>
</dbReference>
<dbReference type="SMR" id="Q82XV0"/>
<dbReference type="STRING" id="228410.NE0148"/>
<dbReference type="KEGG" id="neu:NE0148"/>
<dbReference type="KEGG" id="neu:NE0149"/>
<dbReference type="eggNOG" id="COG0821">
    <property type="taxonomic scope" value="Bacteria"/>
</dbReference>
<dbReference type="HOGENOM" id="CLU_066815_0_0_4"/>
<dbReference type="PhylomeDB" id="Q82XV0"/>
<dbReference type="UniPathway" id="UPA00056">
    <property type="reaction ID" value="UER00096"/>
</dbReference>
<dbReference type="Proteomes" id="UP000001416">
    <property type="component" value="Chromosome"/>
</dbReference>
<dbReference type="GO" id="GO:0051539">
    <property type="term" value="F:4 iron, 4 sulfur cluster binding"/>
    <property type="evidence" value="ECO:0007669"/>
    <property type="project" value="UniProtKB-UniRule"/>
</dbReference>
<dbReference type="GO" id="GO:0046429">
    <property type="term" value="F:4-hydroxy-3-methylbut-2-en-1-yl diphosphate synthase activity (ferredoxin)"/>
    <property type="evidence" value="ECO:0007669"/>
    <property type="project" value="UniProtKB-UniRule"/>
</dbReference>
<dbReference type="GO" id="GO:0141197">
    <property type="term" value="F:4-hydroxy-3-methylbut-2-enyl-diphosphate synthase activity (flavodoxin)"/>
    <property type="evidence" value="ECO:0007669"/>
    <property type="project" value="UniProtKB-EC"/>
</dbReference>
<dbReference type="GO" id="GO:0005506">
    <property type="term" value="F:iron ion binding"/>
    <property type="evidence" value="ECO:0007669"/>
    <property type="project" value="InterPro"/>
</dbReference>
<dbReference type="GO" id="GO:0019288">
    <property type="term" value="P:isopentenyl diphosphate biosynthetic process, methylerythritol 4-phosphate pathway"/>
    <property type="evidence" value="ECO:0007669"/>
    <property type="project" value="UniProtKB-UniRule"/>
</dbReference>
<dbReference type="GO" id="GO:0016114">
    <property type="term" value="P:terpenoid biosynthetic process"/>
    <property type="evidence" value="ECO:0007669"/>
    <property type="project" value="InterPro"/>
</dbReference>
<dbReference type="FunFam" id="3.30.413.10:FF:000012">
    <property type="entry name" value="4-hydroxy-3-methylbut-2-en-1-yl diphosphate synthase (flavodoxin)"/>
    <property type="match status" value="1"/>
</dbReference>
<dbReference type="Gene3D" id="3.20.20.20">
    <property type="entry name" value="Dihydropteroate synthase-like"/>
    <property type="match status" value="1"/>
</dbReference>
<dbReference type="Gene3D" id="3.30.413.10">
    <property type="entry name" value="Sulfite Reductase Hemoprotein, domain 1"/>
    <property type="match status" value="1"/>
</dbReference>
<dbReference type="HAMAP" id="MF_00159">
    <property type="entry name" value="IspG"/>
    <property type="match status" value="1"/>
</dbReference>
<dbReference type="InterPro" id="IPR011005">
    <property type="entry name" value="Dihydropteroate_synth-like_sf"/>
</dbReference>
<dbReference type="InterPro" id="IPR016425">
    <property type="entry name" value="IspG_bac"/>
</dbReference>
<dbReference type="InterPro" id="IPR004588">
    <property type="entry name" value="IspG_bac-typ"/>
</dbReference>
<dbReference type="InterPro" id="IPR045854">
    <property type="entry name" value="NO2/SO3_Rdtase_4Fe4S_sf"/>
</dbReference>
<dbReference type="NCBIfam" id="TIGR00612">
    <property type="entry name" value="ispG_gcpE"/>
    <property type="match status" value="1"/>
</dbReference>
<dbReference type="NCBIfam" id="NF001540">
    <property type="entry name" value="PRK00366.1"/>
    <property type="match status" value="1"/>
</dbReference>
<dbReference type="PANTHER" id="PTHR30454">
    <property type="entry name" value="4-HYDROXY-3-METHYLBUT-2-EN-1-YL DIPHOSPHATE SYNTHASE"/>
    <property type="match status" value="1"/>
</dbReference>
<dbReference type="PANTHER" id="PTHR30454:SF0">
    <property type="entry name" value="4-HYDROXY-3-METHYLBUT-2-EN-1-YL DIPHOSPHATE SYNTHASE (FERREDOXIN), CHLOROPLASTIC"/>
    <property type="match status" value="1"/>
</dbReference>
<dbReference type="Pfam" id="PF04551">
    <property type="entry name" value="GcpE"/>
    <property type="match status" value="1"/>
</dbReference>
<dbReference type="PIRSF" id="PIRSF004640">
    <property type="entry name" value="IspG"/>
    <property type="match status" value="1"/>
</dbReference>
<evidence type="ECO:0000255" key="1">
    <source>
        <dbReference type="HAMAP-Rule" id="MF_00159"/>
    </source>
</evidence>
<evidence type="ECO:0000305" key="2"/>
<name>ISPG_NITEU</name>
<feature type="chain" id="PRO_0000190606" description="4-hydroxy-3-methylbut-2-en-1-yl diphosphate synthase (flavodoxin)">
    <location>
        <begin position="1"/>
        <end position="417"/>
    </location>
</feature>
<feature type="binding site" evidence="1">
    <location>
        <position position="305"/>
    </location>
    <ligand>
        <name>[4Fe-4S] cluster</name>
        <dbReference type="ChEBI" id="CHEBI:49883"/>
    </ligand>
</feature>
<feature type="binding site" evidence="1">
    <location>
        <position position="308"/>
    </location>
    <ligand>
        <name>[4Fe-4S] cluster</name>
        <dbReference type="ChEBI" id="CHEBI:49883"/>
    </ligand>
</feature>
<feature type="binding site" evidence="1">
    <location>
        <position position="351"/>
    </location>
    <ligand>
        <name>[4Fe-4S] cluster</name>
        <dbReference type="ChEBI" id="CHEBI:49883"/>
    </ligand>
</feature>
<feature type="binding site" evidence="1">
    <location>
        <position position="358"/>
    </location>
    <ligand>
        <name>[4Fe-4S] cluster</name>
        <dbReference type="ChEBI" id="CHEBI:49883"/>
    </ligand>
</feature>
<keyword id="KW-0004">4Fe-4S</keyword>
<keyword id="KW-0408">Iron</keyword>
<keyword id="KW-0411">Iron-sulfur</keyword>
<keyword id="KW-0414">Isoprene biosynthesis</keyword>
<keyword id="KW-0479">Metal-binding</keyword>
<keyword id="KW-0560">Oxidoreductase</keyword>
<keyword id="KW-1185">Reference proteome</keyword>
<protein>
    <recommendedName>
        <fullName evidence="1">4-hydroxy-3-methylbut-2-en-1-yl diphosphate synthase (flavodoxin)</fullName>
        <ecNumber evidence="1">1.17.7.3</ecNumber>
    </recommendedName>
    <alternativeName>
        <fullName evidence="1">1-hydroxy-2-methyl-2-(E)-butenyl 4-diphosphate synthase</fullName>
    </alternativeName>
</protein>
<organism>
    <name type="scientific">Nitrosomonas europaea (strain ATCC 19718 / CIP 103999 / KCTC 2705 / NBRC 14298)</name>
    <dbReference type="NCBI Taxonomy" id="228410"/>
    <lineage>
        <taxon>Bacteria</taxon>
        <taxon>Pseudomonadati</taxon>
        <taxon>Pseudomonadota</taxon>
        <taxon>Betaproteobacteria</taxon>
        <taxon>Nitrosomonadales</taxon>
        <taxon>Nitrosomonadaceae</taxon>
        <taxon>Nitrosomonas</taxon>
    </lineage>
</organism>
<reference key="1">
    <citation type="journal article" date="2003" name="J. Bacteriol.">
        <title>Complete genome sequence of the ammonia-oxidizing bacterium and obligate chemolithoautotroph Nitrosomonas europaea.</title>
        <authorList>
            <person name="Chain P."/>
            <person name="Lamerdin J.E."/>
            <person name="Larimer F.W."/>
            <person name="Regala W."/>
            <person name="Lao V."/>
            <person name="Land M.L."/>
            <person name="Hauser L."/>
            <person name="Hooper A.B."/>
            <person name="Klotz M.G."/>
            <person name="Norton J."/>
            <person name="Sayavedra-Soto L.A."/>
            <person name="Arciero D.M."/>
            <person name="Hommes N.G."/>
            <person name="Whittaker M.M."/>
            <person name="Arp D.J."/>
        </authorList>
    </citation>
    <scope>NUCLEOTIDE SEQUENCE [LARGE SCALE GENOMIC DNA]</scope>
    <source>
        <strain>ATCC 19718 / CIP 103999 / KCTC 2705 / NBRC 14298</strain>
    </source>
</reference>
<comment type="function">
    <text evidence="1">Converts 2C-methyl-D-erythritol 2,4-cyclodiphosphate (ME-2,4cPP) into 1-hydroxy-2-methyl-2-(E)-butenyl 4-diphosphate.</text>
</comment>
<comment type="catalytic activity">
    <reaction evidence="1">
        <text>(2E)-4-hydroxy-3-methylbut-2-enyl diphosphate + oxidized [flavodoxin] + H2O + 2 H(+) = 2-C-methyl-D-erythritol 2,4-cyclic diphosphate + reduced [flavodoxin]</text>
        <dbReference type="Rhea" id="RHEA:43604"/>
        <dbReference type="Rhea" id="RHEA-COMP:10622"/>
        <dbReference type="Rhea" id="RHEA-COMP:10623"/>
        <dbReference type="ChEBI" id="CHEBI:15377"/>
        <dbReference type="ChEBI" id="CHEBI:15378"/>
        <dbReference type="ChEBI" id="CHEBI:57618"/>
        <dbReference type="ChEBI" id="CHEBI:58210"/>
        <dbReference type="ChEBI" id="CHEBI:58483"/>
        <dbReference type="ChEBI" id="CHEBI:128753"/>
        <dbReference type="EC" id="1.17.7.3"/>
    </reaction>
</comment>
<comment type="cofactor">
    <cofactor evidence="1">
        <name>[4Fe-4S] cluster</name>
        <dbReference type="ChEBI" id="CHEBI:49883"/>
    </cofactor>
    <text evidence="1">Binds 1 [4Fe-4S] cluster.</text>
</comment>
<comment type="pathway">
    <text evidence="1">Isoprenoid biosynthesis; isopentenyl diphosphate biosynthesis via DXP pathway; isopentenyl diphosphate from 1-deoxy-D-xylulose 5-phosphate: step 5/6.</text>
</comment>
<comment type="similarity">
    <text evidence="1">Belongs to the IspG family.</text>
</comment>
<comment type="sequence caution" evidence="2">
    <conflict type="frameshift">
        <sequence resource="EMBL-CDS" id="CAD84060"/>
    </conflict>
    <text>Produces two separate ORFs.</text>
</comment>
<sequence>MSSNNVPASRRKCVGVKVGSVMIGGGAPIVVQSMTNTDTADEVSTTQQVAQLALAGSELVRITVNSMEAARAVAGIRARLDDMGCHVPLVGDFHFNGHKLLTAYPECARALAKYRINPGNVGHGRKRDEQFSLLIETACKYDKPVRIGVNWGSLDPEMLARIMDENARSPDPLGASQVMHKALITSALESAARAEELGLARDHIVLSCKVSGVARQQDMIAVYGALAEQCDYALHLGLTEAGMGSKGIVASTAALAVLLFKGIGDTIRVSLTPEPGGDRAREVIVAQEILQTMGLRAFVPLVAACPGCGRTTSTYFQELAESIQIYVREQMVIWREQYEGVENMSLAVMGCVVNGPGESKHADIGISLPGSGETPVAPVFVDGQKTVTLKGDNIAGEFRMIVDEYVRTKYRKKAANA</sequence>
<gene>
    <name evidence="1" type="primary">ispG</name>
    <name type="ordered locus">NE0148/NE0149</name>
</gene>
<accession>Q82XV0</accession>
<accession>Q82XV1</accession>